<accession>Q5BKW9</accession>
<evidence type="ECO:0000250" key="1"/>
<evidence type="ECO:0000250" key="2">
    <source>
        <dbReference type="UniProtKB" id="Q7L266"/>
    </source>
</evidence>
<evidence type="ECO:0000269" key="3">
    <source>
    </source>
</evidence>
<evidence type="ECO:0000305" key="4"/>
<organism>
    <name type="scientific">Danio rerio</name>
    <name type="common">Zebrafish</name>
    <name type="synonym">Brachydanio rerio</name>
    <dbReference type="NCBI Taxonomy" id="7955"/>
    <lineage>
        <taxon>Eukaryota</taxon>
        <taxon>Metazoa</taxon>
        <taxon>Chordata</taxon>
        <taxon>Craniata</taxon>
        <taxon>Vertebrata</taxon>
        <taxon>Euteleostomi</taxon>
        <taxon>Actinopterygii</taxon>
        <taxon>Neopterygii</taxon>
        <taxon>Teleostei</taxon>
        <taxon>Ostariophysi</taxon>
        <taxon>Cypriniformes</taxon>
        <taxon>Danionidae</taxon>
        <taxon>Danioninae</taxon>
        <taxon>Danio</taxon>
    </lineage>
</organism>
<comment type="function">
    <text evidence="1">Has both L-asparaginase and beta-aspartyl peptidase activity. Does not have aspartylglucosaminidase activity and is inactive toward GlcNAc-L-Asn. Likewise, has no activity toward glutamine.</text>
</comment>
<comment type="catalytic activity">
    <reaction evidence="2">
        <text>L-asparagine + H2O = L-aspartate + NH4(+)</text>
        <dbReference type="Rhea" id="RHEA:21016"/>
        <dbReference type="ChEBI" id="CHEBI:15377"/>
        <dbReference type="ChEBI" id="CHEBI:28938"/>
        <dbReference type="ChEBI" id="CHEBI:29991"/>
        <dbReference type="ChEBI" id="CHEBI:58048"/>
        <dbReference type="EC" id="3.5.1.1"/>
    </reaction>
</comment>
<comment type="catalytic activity">
    <reaction evidence="2">
        <text>Cleavage of a beta-linked Asp residue from the N-terminus of a polypeptide.</text>
        <dbReference type="EC" id="3.4.19.5"/>
    </reaction>
</comment>
<comment type="subunit">
    <text evidence="1">Heterodimer of an alpha and beta chain produced by autocleavage.</text>
</comment>
<comment type="subcellular location">
    <subcellularLocation>
        <location evidence="2">Cytoplasm</location>
    </subcellularLocation>
</comment>
<comment type="PTM">
    <text evidence="2">Cleaved into an alpha and beta chain by autocatalysis; this activates the enzyme. The N-terminal residue of the beta subunit is responsible for the nucleophile hydrolase activity.</text>
</comment>
<comment type="disruption phenotype">
    <text evidence="3">Abnormal and deformed fish at 6 dpf.</text>
</comment>
<comment type="similarity">
    <text evidence="4">Belongs to the Ntn-hydrolase family.</text>
</comment>
<gene>
    <name type="primary">asrgl1</name>
    <name type="ORF">zgc:103568</name>
</gene>
<proteinExistence type="evidence at transcript level"/>
<name>ASGL1_DANRE</name>
<reference key="1">
    <citation type="submission" date="2005-03" db="EMBL/GenBank/DDBJ databases">
        <authorList>
            <consortium name="NIH - Zebrafish Gene Collection (ZGC) project"/>
        </authorList>
    </citation>
    <scope>NUCLEOTIDE SEQUENCE [LARGE SCALE MRNA]</scope>
    <source>
        <tissue>Liver</tissue>
    </source>
</reference>
<reference key="2">
    <citation type="journal article" date="2016" name="Hum. Mol. Genet.">
        <title>A missense mutation in ASRGL1 is involved in causing autosomal recessive retinal degeneration.</title>
        <authorList>
            <person name="Biswas P."/>
            <person name="Chavali V.R."/>
            <person name="Agnello G."/>
            <person name="Stone E."/>
            <person name="Chakarova C."/>
            <person name="Duncan J.L."/>
            <person name="Kannabiran C."/>
            <person name="Homsher M."/>
            <person name="Bhattacharya S.S."/>
            <person name="Naeem M.A."/>
            <person name="Kimchi A."/>
            <person name="Sharon D."/>
            <person name="Iwata T."/>
            <person name="Riazuddin S."/>
            <person name="Reddy G.B."/>
            <person name="Hejtmancik J.F."/>
            <person name="Georgiou G."/>
            <person name="Riazuddin S.A."/>
            <person name="Ayyagari R."/>
        </authorList>
    </citation>
    <scope>DISRUPTION PHENOTYPE</scope>
</reference>
<protein>
    <recommendedName>
        <fullName>Isoaspartyl peptidase/L-asparaginase</fullName>
        <ecNumber evidence="2">3.4.19.5</ecNumber>
        <ecNumber evidence="2">3.5.1.1</ecNumber>
    </recommendedName>
    <alternativeName>
        <fullName>Asparaginase-like protein 1</fullName>
    </alternativeName>
    <alternativeName>
        <fullName>Beta-aspartyl-peptidase</fullName>
    </alternativeName>
    <alternativeName>
        <fullName>Isoaspartyl dipeptidase</fullName>
    </alternativeName>
    <alternativeName>
        <fullName>L-asparagine amidohydrolase</fullName>
    </alternativeName>
    <component>
        <recommendedName>
            <fullName>Isoaspartyl peptidase/L-asparaginase alpha chain</fullName>
        </recommendedName>
    </component>
    <component>
        <recommendedName>
            <fullName>Isoaspartyl peptidase/L-asparaginase beta chain</fullName>
        </recommendedName>
    </component>
</protein>
<feature type="chain" id="PRO_0000420563" description="Isoaspartyl peptidase/L-asparaginase alpha chain">
    <location>
        <begin position="1"/>
        <end position="166"/>
    </location>
</feature>
<feature type="chain" id="PRO_0000420564" description="Isoaspartyl peptidase/L-asparaginase beta chain">
    <location>
        <begin position="167"/>
        <end position="310"/>
    </location>
</feature>
<feature type="active site" description="Nucleophile" evidence="1">
    <location>
        <position position="167"/>
    </location>
</feature>
<feature type="binding site" evidence="1">
    <location>
        <begin position="195"/>
        <end position="198"/>
    </location>
    <ligand>
        <name>substrate</name>
    </ligand>
</feature>
<feature type="binding site" evidence="1">
    <location>
        <begin position="218"/>
        <end position="221"/>
    </location>
    <ligand>
        <name>substrate</name>
    </ligand>
</feature>
<sequence length="310" mass="32929">MLPVVVVHGGAGHIPKERTEESTIGVKEAARTGYAILQRGGSAVDAVVEAVALMETNPRFNAGRGSVLNIKGEVEMDALVMDGRTLDSGAVSAVRRIANPVQLARLVMEKTKHLCLTAEGASKFARSMGVPEVPEESLITDYAKMRWKKNLEPDANPVECQMGKMGTVGAVAVDMDGNIACATSTGGMINKMEGRVGDTPCVGCGGYADNKIGAVSPTGHGEAIMKVTLSRLVLFHMEQGKTPEEASDLALAYMKERVDGLGGVVVVDHNGTWAARFSSLQMSWAAAQQGKLHFGLFHGDHFTEPVEEHT</sequence>
<keyword id="KW-0068">Autocatalytic cleavage</keyword>
<keyword id="KW-0963">Cytoplasm</keyword>
<keyword id="KW-0378">Hydrolase</keyword>
<keyword id="KW-0645">Protease</keyword>
<keyword id="KW-1185">Reference proteome</keyword>
<dbReference type="EC" id="3.4.19.5" evidence="2"/>
<dbReference type="EC" id="3.5.1.1" evidence="2"/>
<dbReference type="EMBL" id="BC090901">
    <property type="protein sequence ID" value="AAH90901.1"/>
    <property type="molecule type" value="mRNA"/>
</dbReference>
<dbReference type="RefSeq" id="NP_001013547.1">
    <property type="nucleotide sequence ID" value="NM_001013529.2"/>
</dbReference>
<dbReference type="SMR" id="Q5BKW9"/>
<dbReference type="FunCoup" id="Q5BKW9">
    <property type="interactions" value="283"/>
</dbReference>
<dbReference type="STRING" id="7955.ENSDARP00000033788"/>
<dbReference type="PaxDb" id="7955-ENSDARP00000033788"/>
<dbReference type="Ensembl" id="ENSDART00000029521">
    <property type="protein sequence ID" value="ENSDARP00000033788"/>
    <property type="gene ID" value="ENSDARG00000021681"/>
</dbReference>
<dbReference type="Ensembl" id="ENSDART00000159281">
    <property type="protein sequence ID" value="ENSDARP00000130414"/>
    <property type="gene ID" value="ENSDARG00000021681"/>
</dbReference>
<dbReference type="GeneID" id="541402"/>
<dbReference type="KEGG" id="dre:541402"/>
<dbReference type="AGR" id="ZFIN:ZDB-GENE-050320-102"/>
<dbReference type="CTD" id="80150"/>
<dbReference type="ZFIN" id="ZDB-GENE-050320-102">
    <property type="gene designation" value="asrgl1"/>
</dbReference>
<dbReference type="eggNOG" id="KOG1592">
    <property type="taxonomic scope" value="Eukaryota"/>
</dbReference>
<dbReference type="HOGENOM" id="CLU_021603_1_2_1"/>
<dbReference type="InParanoid" id="Q5BKW9"/>
<dbReference type="OMA" id="MGIIMVD"/>
<dbReference type="OrthoDB" id="2262349at2759"/>
<dbReference type="PhylomeDB" id="Q5BKW9"/>
<dbReference type="TreeFam" id="TF323960"/>
<dbReference type="Reactome" id="R-DRE-8964208">
    <property type="pathway name" value="Phenylalanine metabolism"/>
</dbReference>
<dbReference type="PRO" id="PR:Q5BKW9"/>
<dbReference type="Proteomes" id="UP000000437">
    <property type="component" value="Chromosome 13"/>
</dbReference>
<dbReference type="Bgee" id="ENSDARG00000021681">
    <property type="expression patterns" value="Expressed in intestine and 21 other cell types or tissues"/>
</dbReference>
<dbReference type="ExpressionAtlas" id="Q5BKW9">
    <property type="expression patterns" value="baseline and differential"/>
</dbReference>
<dbReference type="GO" id="GO:0005737">
    <property type="term" value="C:cytoplasm"/>
    <property type="evidence" value="ECO:0000250"/>
    <property type="project" value="UniProtKB"/>
</dbReference>
<dbReference type="GO" id="GO:0001917">
    <property type="term" value="C:photoreceptor inner segment"/>
    <property type="evidence" value="ECO:0000250"/>
    <property type="project" value="UniProtKB"/>
</dbReference>
<dbReference type="GO" id="GO:0004067">
    <property type="term" value="F:asparaginase activity"/>
    <property type="evidence" value="ECO:0000250"/>
    <property type="project" value="UniProtKB"/>
</dbReference>
<dbReference type="GO" id="GO:0008798">
    <property type="term" value="F:beta-aspartyl-peptidase activity"/>
    <property type="evidence" value="ECO:0000250"/>
    <property type="project" value="UniProtKB"/>
</dbReference>
<dbReference type="GO" id="GO:0033345">
    <property type="term" value="P:asparagine catabolic process via L-aspartate"/>
    <property type="evidence" value="ECO:0000250"/>
    <property type="project" value="UniProtKB"/>
</dbReference>
<dbReference type="GO" id="GO:0006508">
    <property type="term" value="P:proteolysis"/>
    <property type="evidence" value="ECO:0007669"/>
    <property type="project" value="UniProtKB-KW"/>
</dbReference>
<dbReference type="CDD" id="cd04702">
    <property type="entry name" value="ASRGL1_like"/>
    <property type="match status" value="1"/>
</dbReference>
<dbReference type="FunFam" id="3.60.20.30:FF:000001">
    <property type="entry name" value="Isoaspartyl peptidase/L-asparaginase"/>
    <property type="match status" value="1"/>
</dbReference>
<dbReference type="Gene3D" id="3.60.20.30">
    <property type="entry name" value="(Glycosyl)asparaginase"/>
    <property type="match status" value="1"/>
</dbReference>
<dbReference type="InterPro" id="IPR033844">
    <property type="entry name" value="ASRGL1_meta"/>
</dbReference>
<dbReference type="InterPro" id="IPR029055">
    <property type="entry name" value="Ntn_hydrolases_N"/>
</dbReference>
<dbReference type="InterPro" id="IPR000246">
    <property type="entry name" value="Peptidase_T2"/>
</dbReference>
<dbReference type="PANTHER" id="PTHR10188:SF41">
    <property type="entry name" value="ISOASPARTYL PEPTIDASE_L-ASPARAGINASE"/>
    <property type="match status" value="1"/>
</dbReference>
<dbReference type="PANTHER" id="PTHR10188">
    <property type="entry name" value="L-ASPARAGINASE"/>
    <property type="match status" value="1"/>
</dbReference>
<dbReference type="Pfam" id="PF01112">
    <property type="entry name" value="Asparaginase_2"/>
    <property type="match status" value="1"/>
</dbReference>
<dbReference type="SUPFAM" id="SSF56235">
    <property type="entry name" value="N-terminal nucleophile aminohydrolases (Ntn hydrolases)"/>
    <property type="match status" value="1"/>
</dbReference>